<keyword id="KW-0255">Endonuclease</keyword>
<keyword id="KW-0378">Hydrolase</keyword>
<keyword id="KW-0540">Nuclease</keyword>
<keyword id="KW-1185">Reference proteome</keyword>
<keyword id="KW-0819">tRNA processing</keyword>
<proteinExistence type="inferred from homology"/>
<evidence type="ECO:0000255" key="1">
    <source>
        <dbReference type="HAMAP-Rule" id="MF_01078"/>
    </source>
</evidence>
<organism>
    <name type="scientific">Aeropyrum pernix (strain ATCC 700893 / DSM 11879 / JCM 9820 / NBRC 100138 / K1)</name>
    <dbReference type="NCBI Taxonomy" id="272557"/>
    <lineage>
        <taxon>Archaea</taxon>
        <taxon>Thermoproteota</taxon>
        <taxon>Thermoprotei</taxon>
        <taxon>Desulfurococcales</taxon>
        <taxon>Desulfurococcaceae</taxon>
        <taxon>Aeropyrum</taxon>
    </lineage>
</organism>
<feature type="chain" id="PRO_0000136076" description="RNA-free ribonuclease P">
    <location>
        <begin position="1"/>
        <end position="214"/>
    </location>
</feature>
<sequence>MGGRPPPSVGSVVVADTTMFTDAKLREVLGARSLEEAARIMARILARASRMGLTVYITPSVRAEIERFMLGNGVHPTTIARLMAWVRVKPPTTHELRLPAAMFRRYVETVRARLDKGLRVAEDHVRRALRSRDEEGDIVRSLREKYREYTRKGMLDSVEDVDTLLLALELGAAIVTSDEGLRRAAEDLGLTVLTPVELLEYILALEEEVKSVEE</sequence>
<gene>
    <name type="ordered locus">APE_1564.1</name>
</gene>
<name>RFRNP_AERPE</name>
<dbReference type="EC" id="3.1.26.5" evidence="1"/>
<dbReference type="EMBL" id="BA000002">
    <property type="protein sequence ID" value="BAA80564.2"/>
    <property type="molecule type" value="Genomic_DNA"/>
</dbReference>
<dbReference type="PIR" id="G72534">
    <property type="entry name" value="G72534"/>
</dbReference>
<dbReference type="SMR" id="Q9YBN4"/>
<dbReference type="STRING" id="272557.APE_1564.1"/>
<dbReference type="EnsemblBacteria" id="BAA80564">
    <property type="protein sequence ID" value="BAA80564"/>
    <property type="gene ID" value="APE_1564.1"/>
</dbReference>
<dbReference type="KEGG" id="ape:APE_1564.1"/>
<dbReference type="eggNOG" id="arCOG00720">
    <property type="taxonomic scope" value="Archaea"/>
</dbReference>
<dbReference type="Proteomes" id="UP000002518">
    <property type="component" value="Chromosome"/>
</dbReference>
<dbReference type="GO" id="GO:0004526">
    <property type="term" value="F:ribonuclease P activity"/>
    <property type="evidence" value="ECO:0007669"/>
    <property type="project" value="UniProtKB-UniRule"/>
</dbReference>
<dbReference type="GO" id="GO:0001682">
    <property type="term" value="P:tRNA 5'-leader removal"/>
    <property type="evidence" value="ECO:0007669"/>
    <property type="project" value="UniProtKB-UniRule"/>
</dbReference>
<dbReference type="HAMAP" id="MF_01078">
    <property type="entry name" value="RNA_free_RNase_P"/>
    <property type="match status" value="1"/>
</dbReference>
<dbReference type="InterPro" id="IPR029060">
    <property type="entry name" value="PIN-like_dom_sf"/>
</dbReference>
<dbReference type="InterPro" id="IPR014856">
    <property type="entry name" value="RNA_free_RNase_P"/>
</dbReference>
<dbReference type="NCBIfam" id="NF003345">
    <property type="entry name" value="PRK04358.1-6"/>
    <property type="match status" value="1"/>
</dbReference>
<dbReference type="NCBIfam" id="TIGR03875">
    <property type="entry name" value="RNA_lig_partner"/>
    <property type="match status" value="1"/>
</dbReference>
<dbReference type="PANTHER" id="PTHR41173:SF1">
    <property type="entry name" value="RNA-FREE RIBONUCLEASE P"/>
    <property type="match status" value="1"/>
</dbReference>
<dbReference type="PANTHER" id="PTHR41173">
    <property type="entry name" value="UPF0278 PROTEIN TK1425"/>
    <property type="match status" value="1"/>
</dbReference>
<dbReference type="Pfam" id="PF08745">
    <property type="entry name" value="PIN_5"/>
    <property type="match status" value="1"/>
</dbReference>
<dbReference type="SUPFAM" id="SSF88723">
    <property type="entry name" value="PIN domain-like"/>
    <property type="match status" value="1"/>
</dbReference>
<reference key="1">
    <citation type="journal article" date="1999" name="DNA Res.">
        <title>Complete genome sequence of an aerobic hyper-thermophilic crenarchaeon, Aeropyrum pernix K1.</title>
        <authorList>
            <person name="Kawarabayasi Y."/>
            <person name="Hino Y."/>
            <person name="Horikawa H."/>
            <person name="Yamazaki S."/>
            <person name="Haikawa Y."/>
            <person name="Jin-no K."/>
            <person name="Takahashi M."/>
            <person name="Sekine M."/>
            <person name="Baba S."/>
            <person name="Ankai A."/>
            <person name="Kosugi H."/>
            <person name="Hosoyama A."/>
            <person name="Fukui S."/>
            <person name="Nagai Y."/>
            <person name="Nishijima K."/>
            <person name="Nakazawa H."/>
            <person name="Takamiya M."/>
            <person name="Masuda S."/>
            <person name="Funahashi T."/>
            <person name="Tanaka T."/>
            <person name="Kudoh Y."/>
            <person name="Yamazaki J."/>
            <person name="Kushida N."/>
            <person name="Oguchi A."/>
            <person name="Aoki K."/>
            <person name="Kubota K."/>
            <person name="Nakamura Y."/>
            <person name="Nomura N."/>
            <person name="Sako Y."/>
            <person name="Kikuchi H."/>
        </authorList>
    </citation>
    <scope>NUCLEOTIDE SEQUENCE [LARGE SCALE GENOMIC DNA]</scope>
    <source>
        <strain>ATCC 700893 / DSM 11879 / JCM 9820 / NBRC 100138 / K1</strain>
    </source>
</reference>
<protein>
    <recommendedName>
        <fullName evidence="1">RNA-free ribonuclease P</fullName>
        <shortName evidence="1">RNA-free RNase P</shortName>
        <ecNumber evidence="1">3.1.26.5</ecNumber>
    </recommendedName>
    <alternativeName>
        <fullName evidence="1">Protein-only RNase P</fullName>
    </alternativeName>
</protein>
<accession>Q9YBN4</accession>
<comment type="function">
    <text evidence="1">RNA-free RNase P that catalyzes the removal of the 5'-leader sequence from pre-tRNA to produce the mature 5'-terminus.</text>
</comment>
<comment type="catalytic activity">
    <reaction evidence="1">
        <text>Endonucleolytic cleavage of RNA, removing 5'-extranucleotides from tRNA precursor.</text>
        <dbReference type="EC" id="3.1.26.5"/>
    </reaction>
</comment>
<comment type="similarity">
    <text evidence="1">Belongs to the HARP family.</text>
</comment>